<gene>
    <name evidence="1" type="primary">folD</name>
    <name type="ordered locus">CC_1217</name>
</gene>
<proteinExistence type="inferred from homology"/>
<feature type="chain" id="PRO_0000268307" description="Bifunctional protein FolD">
    <location>
        <begin position="1"/>
        <end position="297"/>
    </location>
</feature>
<feature type="binding site" evidence="1">
    <location>
        <begin position="167"/>
        <end position="169"/>
    </location>
    <ligand>
        <name>NADP(+)</name>
        <dbReference type="ChEBI" id="CHEBI:58349"/>
    </ligand>
</feature>
<feature type="binding site" evidence="1">
    <location>
        <position position="192"/>
    </location>
    <ligand>
        <name>NADP(+)</name>
        <dbReference type="ChEBI" id="CHEBI:58349"/>
    </ligand>
</feature>
<feature type="binding site" evidence="1">
    <location>
        <position position="233"/>
    </location>
    <ligand>
        <name>NADP(+)</name>
        <dbReference type="ChEBI" id="CHEBI:58349"/>
    </ligand>
</feature>
<name>FOLD_CAUVC</name>
<sequence length="297" mass="30685">MAQAKLIDGKAFAADLRAKIAEEVAALKAEHGVTPGLAVVLVGEDPASQVYVRNKGEQTTAAGMYSETHRLPETTTQDELLAVVAKLNADPKIHGVLVQFPVPPHISQMDVVAALSPDKDVDGLTVTNAGRLASGLPALAPCTPTGCMMLIRDAIGDLKGKTAVVIGRSNLMGKPMAQMLLAADCTVTIAHSRSQDLPSIVRQADIVVAAVGRAEMVKADWVKPGAVVIDVGITRFPARDPEAAAAGKTRLVGDVAFDEVREVAGAITPVPGGVGPMTIACLLANTLTAAKRLSGIA</sequence>
<dbReference type="EC" id="1.5.1.5" evidence="1"/>
<dbReference type="EC" id="3.5.4.9" evidence="1"/>
<dbReference type="EMBL" id="AE005673">
    <property type="protein sequence ID" value="AAK23199.1"/>
    <property type="status" value="ALT_INIT"/>
    <property type="molecule type" value="Genomic_DNA"/>
</dbReference>
<dbReference type="PIR" id="C87400">
    <property type="entry name" value="C87400"/>
</dbReference>
<dbReference type="RefSeq" id="NP_420031.1">
    <property type="nucleotide sequence ID" value="NC_002696.2"/>
</dbReference>
<dbReference type="RefSeq" id="WP_012640180.1">
    <property type="nucleotide sequence ID" value="NC_002696.2"/>
</dbReference>
<dbReference type="SMR" id="Q9A8Y0"/>
<dbReference type="STRING" id="190650.CC_1217"/>
<dbReference type="EnsemblBacteria" id="AAK23199">
    <property type="protein sequence ID" value="AAK23199"/>
    <property type="gene ID" value="CC_1217"/>
</dbReference>
<dbReference type="KEGG" id="ccr:CC_1217"/>
<dbReference type="PATRIC" id="fig|190650.5.peg.1241"/>
<dbReference type="eggNOG" id="COG0190">
    <property type="taxonomic scope" value="Bacteria"/>
</dbReference>
<dbReference type="HOGENOM" id="CLU_034045_2_1_5"/>
<dbReference type="UniPathway" id="UPA00193"/>
<dbReference type="Proteomes" id="UP000001816">
    <property type="component" value="Chromosome"/>
</dbReference>
<dbReference type="GO" id="GO:0005829">
    <property type="term" value="C:cytosol"/>
    <property type="evidence" value="ECO:0007669"/>
    <property type="project" value="TreeGrafter"/>
</dbReference>
<dbReference type="GO" id="GO:0004477">
    <property type="term" value="F:methenyltetrahydrofolate cyclohydrolase activity"/>
    <property type="evidence" value="ECO:0007669"/>
    <property type="project" value="UniProtKB-UniRule"/>
</dbReference>
<dbReference type="GO" id="GO:0004488">
    <property type="term" value="F:methylenetetrahydrofolate dehydrogenase (NADP+) activity"/>
    <property type="evidence" value="ECO:0007669"/>
    <property type="project" value="UniProtKB-UniRule"/>
</dbReference>
<dbReference type="GO" id="GO:0000105">
    <property type="term" value="P:L-histidine biosynthetic process"/>
    <property type="evidence" value="ECO:0007669"/>
    <property type="project" value="UniProtKB-KW"/>
</dbReference>
<dbReference type="GO" id="GO:0009086">
    <property type="term" value="P:methionine biosynthetic process"/>
    <property type="evidence" value="ECO:0007669"/>
    <property type="project" value="UniProtKB-KW"/>
</dbReference>
<dbReference type="GO" id="GO:0006164">
    <property type="term" value="P:purine nucleotide biosynthetic process"/>
    <property type="evidence" value="ECO:0007669"/>
    <property type="project" value="UniProtKB-KW"/>
</dbReference>
<dbReference type="GO" id="GO:0035999">
    <property type="term" value="P:tetrahydrofolate interconversion"/>
    <property type="evidence" value="ECO:0007669"/>
    <property type="project" value="UniProtKB-UniRule"/>
</dbReference>
<dbReference type="CDD" id="cd01080">
    <property type="entry name" value="NAD_bind_m-THF_DH_Cyclohyd"/>
    <property type="match status" value="1"/>
</dbReference>
<dbReference type="FunFam" id="3.40.50.720:FF:000006">
    <property type="entry name" value="Bifunctional protein FolD"/>
    <property type="match status" value="1"/>
</dbReference>
<dbReference type="FunFam" id="3.40.50.10860:FF:000005">
    <property type="entry name" value="C-1-tetrahydrofolate synthase, cytoplasmic, putative"/>
    <property type="match status" value="1"/>
</dbReference>
<dbReference type="Gene3D" id="3.40.50.10860">
    <property type="entry name" value="Leucine Dehydrogenase, chain A, domain 1"/>
    <property type="match status" value="1"/>
</dbReference>
<dbReference type="Gene3D" id="3.40.50.720">
    <property type="entry name" value="NAD(P)-binding Rossmann-like Domain"/>
    <property type="match status" value="1"/>
</dbReference>
<dbReference type="HAMAP" id="MF_01576">
    <property type="entry name" value="THF_DHG_CYH"/>
    <property type="match status" value="1"/>
</dbReference>
<dbReference type="InterPro" id="IPR046346">
    <property type="entry name" value="Aminoacid_DH-like_N_sf"/>
</dbReference>
<dbReference type="InterPro" id="IPR036291">
    <property type="entry name" value="NAD(P)-bd_dom_sf"/>
</dbReference>
<dbReference type="InterPro" id="IPR000672">
    <property type="entry name" value="THF_DH/CycHdrlase"/>
</dbReference>
<dbReference type="InterPro" id="IPR020630">
    <property type="entry name" value="THF_DH/CycHdrlase_cat_dom"/>
</dbReference>
<dbReference type="InterPro" id="IPR020867">
    <property type="entry name" value="THF_DH/CycHdrlase_CS"/>
</dbReference>
<dbReference type="InterPro" id="IPR020631">
    <property type="entry name" value="THF_DH/CycHdrlase_NAD-bd_dom"/>
</dbReference>
<dbReference type="NCBIfam" id="NF010783">
    <property type="entry name" value="PRK14186.1"/>
    <property type="match status" value="1"/>
</dbReference>
<dbReference type="NCBIfam" id="NF010785">
    <property type="entry name" value="PRK14188.1"/>
    <property type="match status" value="1"/>
</dbReference>
<dbReference type="PANTHER" id="PTHR48099:SF5">
    <property type="entry name" value="C-1-TETRAHYDROFOLATE SYNTHASE, CYTOPLASMIC"/>
    <property type="match status" value="1"/>
</dbReference>
<dbReference type="PANTHER" id="PTHR48099">
    <property type="entry name" value="C-1-TETRAHYDROFOLATE SYNTHASE, CYTOPLASMIC-RELATED"/>
    <property type="match status" value="1"/>
</dbReference>
<dbReference type="Pfam" id="PF00763">
    <property type="entry name" value="THF_DHG_CYH"/>
    <property type="match status" value="1"/>
</dbReference>
<dbReference type="Pfam" id="PF02882">
    <property type="entry name" value="THF_DHG_CYH_C"/>
    <property type="match status" value="1"/>
</dbReference>
<dbReference type="PRINTS" id="PR00085">
    <property type="entry name" value="THFDHDRGNASE"/>
</dbReference>
<dbReference type="SUPFAM" id="SSF53223">
    <property type="entry name" value="Aminoacid dehydrogenase-like, N-terminal domain"/>
    <property type="match status" value="1"/>
</dbReference>
<dbReference type="SUPFAM" id="SSF51735">
    <property type="entry name" value="NAD(P)-binding Rossmann-fold domains"/>
    <property type="match status" value="1"/>
</dbReference>
<dbReference type="PROSITE" id="PS00767">
    <property type="entry name" value="THF_DHG_CYH_2"/>
    <property type="match status" value="1"/>
</dbReference>
<accession>Q9A8Y0</accession>
<organism>
    <name type="scientific">Caulobacter vibrioides (strain ATCC 19089 / CIP 103742 / CB 15)</name>
    <name type="common">Caulobacter crescentus</name>
    <dbReference type="NCBI Taxonomy" id="190650"/>
    <lineage>
        <taxon>Bacteria</taxon>
        <taxon>Pseudomonadati</taxon>
        <taxon>Pseudomonadota</taxon>
        <taxon>Alphaproteobacteria</taxon>
        <taxon>Caulobacterales</taxon>
        <taxon>Caulobacteraceae</taxon>
        <taxon>Caulobacter</taxon>
    </lineage>
</organism>
<comment type="function">
    <text evidence="1">Catalyzes the oxidation of 5,10-methylenetetrahydrofolate to 5,10-methenyltetrahydrofolate and then the hydrolysis of 5,10-methenyltetrahydrofolate to 10-formyltetrahydrofolate.</text>
</comment>
<comment type="catalytic activity">
    <reaction evidence="1">
        <text>(6R)-5,10-methylene-5,6,7,8-tetrahydrofolate + NADP(+) = (6R)-5,10-methenyltetrahydrofolate + NADPH</text>
        <dbReference type="Rhea" id="RHEA:22812"/>
        <dbReference type="ChEBI" id="CHEBI:15636"/>
        <dbReference type="ChEBI" id="CHEBI:57455"/>
        <dbReference type="ChEBI" id="CHEBI:57783"/>
        <dbReference type="ChEBI" id="CHEBI:58349"/>
        <dbReference type="EC" id="1.5.1.5"/>
    </reaction>
</comment>
<comment type="catalytic activity">
    <reaction evidence="1">
        <text>(6R)-5,10-methenyltetrahydrofolate + H2O = (6R)-10-formyltetrahydrofolate + H(+)</text>
        <dbReference type="Rhea" id="RHEA:23700"/>
        <dbReference type="ChEBI" id="CHEBI:15377"/>
        <dbReference type="ChEBI" id="CHEBI:15378"/>
        <dbReference type="ChEBI" id="CHEBI:57455"/>
        <dbReference type="ChEBI" id="CHEBI:195366"/>
        <dbReference type="EC" id="3.5.4.9"/>
    </reaction>
</comment>
<comment type="pathway">
    <text evidence="1">One-carbon metabolism; tetrahydrofolate interconversion.</text>
</comment>
<comment type="subunit">
    <text evidence="1">Homodimer.</text>
</comment>
<comment type="similarity">
    <text evidence="1">Belongs to the tetrahydrofolate dehydrogenase/cyclohydrolase family.</text>
</comment>
<comment type="sequence caution" evidence="2">
    <conflict type="erroneous initiation">
        <sequence resource="EMBL-CDS" id="AAK23199"/>
    </conflict>
</comment>
<evidence type="ECO:0000255" key="1">
    <source>
        <dbReference type="HAMAP-Rule" id="MF_01576"/>
    </source>
</evidence>
<evidence type="ECO:0000305" key="2"/>
<protein>
    <recommendedName>
        <fullName evidence="1">Bifunctional protein FolD</fullName>
    </recommendedName>
    <domain>
        <recommendedName>
            <fullName evidence="1">Methylenetetrahydrofolate dehydrogenase</fullName>
            <ecNumber evidence="1">1.5.1.5</ecNumber>
        </recommendedName>
    </domain>
    <domain>
        <recommendedName>
            <fullName evidence="1">Methenyltetrahydrofolate cyclohydrolase</fullName>
            <ecNumber evidence="1">3.5.4.9</ecNumber>
        </recommendedName>
    </domain>
</protein>
<keyword id="KW-0028">Amino-acid biosynthesis</keyword>
<keyword id="KW-0368">Histidine biosynthesis</keyword>
<keyword id="KW-0378">Hydrolase</keyword>
<keyword id="KW-0486">Methionine biosynthesis</keyword>
<keyword id="KW-0511">Multifunctional enzyme</keyword>
<keyword id="KW-0521">NADP</keyword>
<keyword id="KW-0554">One-carbon metabolism</keyword>
<keyword id="KW-0560">Oxidoreductase</keyword>
<keyword id="KW-0658">Purine biosynthesis</keyword>
<keyword id="KW-1185">Reference proteome</keyword>
<reference key="1">
    <citation type="journal article" date="2001" name="Proc. Natl. Acad. Sci. U.S.A.">
        <title>Complete genome sequence of Caulobacter crescentus.</title>
        <authorList>
            <person name="Nierman W.C."/>
            <person name="Feldblyum T.V."/>
            <person name="Laub M.T."/>
            <person name="Paulsen I.T."/>
            <person name="Nelson K.E."/>
            <person name="Eisen J.A."/>
            <person name="Heidelberg J.F."/>
            <person name="Alley M.R.K."/>
            <person name="Ohta N."/>
            <person name="Maddock J.R."/>
            <person name="Potocka I."/>
            <person name="Nelson W.C."/>
            <person name="Newton A."/>
            <person name="Stephens C."/>
            <person name="Phadke N.D."/>
            <person name="Ely B."/>
            <person name="DeBoy R.T."/>
            <person name="Dodson R.J."/>
            <person name="Durkin A.S."/>
            <person name="Gwinn M.L."/>
            <person name="Haft D.H."/>
            <person name="Kolonay J.F."/>
            <person name="Smit J."/>
            <person name="Craven M.B."/>
            <person name="Khouri H.M."/>
            <person name="Shetty J."/>
            <person name="Berry K.J."/>
            <person name="Utterback T.R."/>
            <person name="Tran K."/>
            <person name="Wolf A.M."/>
            <person name="Vamathevan J.J."/>
            <person name="Ermolaeva M.D."/>
            <person name="White O."/>
            <person name="Salzberg S.L."/>
            <person name="Venter J.C."/>
            <person name="Shapiro L."/>
            <person name="Fraser C.M."/>
        </authorList>
    </citation>
    <scope>NUCLEOTIDE SEQUENCE [LARGE SCALE GENOMIC DNA]</scope>
    <source>
        <strain>ATCC 19089 / CIP 103742 / CB 15</strain>
    </source>
</reference>